<reference key="1">
    <citation type="journal article" date="2009" name="Plant Mol. Biol.">
        <title>Insights into corn genes derived from large-scale cDNA sequencing.</title>
        <authorList>
            <person name="Alexandrov N.N."/>
            <person name="Brover V.V."/>
            <person name="Freidin S."/>
            <person name="Troukhan M.E."/>
            <person name="Tatarinova T.V."/>
            <person name="Zhang H."/>
            <person name="Swaller T.J."/>
            <person name="Lu Y.-P."/>
            <person name="Bouck J."/>
            <person name="Flavell R.B."/>
            <person name="Feldmann K.A."/>
        </authorList>
    </citation>
    <scope>NUCLEOTIDE SEQUENCE [LARGE SCALE MRNA]</scope>
</reference>
<reference key="2">
    <citation type="submission" date="2008-07" db="EMBL/GenBank/DDBJ databases">
        <title>Maize full-length cDNA project.</title>
        <authorList>
            <person name="Yu Y."/>
            <person name="Currie J."/>
            <person name="Lomeli R."/>
            <person name="Angelova A."/>
            <person name="Collura K."/>
            <person name="Wissotski M."/>
            <person name="Campos D."/>
            <person name="Kudrna D."/>
            <person name="Golser W."/>
            <person name="Ashely E."/>
            <person name="Haller K."/>
            <person name="Descour A."/>
            <person name="Fernandes J."/>
            <person name="Zuccolo A."/>
            <person name="Soderlund C."/>
            <person name="Walbot V."/>
        </authorList>
    </citation>
    <scope>NUCLEOTIDE SEQUENCE [LARGE SCALE MRNA] OF 1-186</scope>
    <source>
        <strain>cv. B73</strain>
    </source>
</reference>
<reference key="3">
    <citation type="journal article" date="2014" name="Plant Physiol.">
        <title>Functional and evolutionary analysis of the CASPARIAN STRIP MEMBRANE DOMAIN PROTEIN family.</title>
        <authorList>
            <person name="Roppolo D."/>
            <person name="Boeckmann B."/>
            <person name="Pfister A."/>
            <person name="Boutet E."/>
            <person name="Rubio M.C."/>
            <person name="Denervaud-Tendon V."/>
            <person name="Vermeer J.E."/>
            <person name="Gheyselinck J."/>
            <person name="Xenarios I."/>
            <person name="Geldner N."/>
        </authorList>
    </citation>
    <scope>GENE FAMILY</scope>
    <scope>NOMENCLATURE</scope>
</reference>
<protein>
    <recommendedName>
        <fullName>CASP-like protein 2U1</fullName>
        <shortName>ZmCASPL2U1</shortName>
    </recommendedName>
</protein>
<proteinExistence type="evidence at transcript level"/>
<name>CSPL8_MAIZE</name>
<dbReference type="EMBL" id="EU964113">
    <property type="protein sequence ID" value="ACG36231.1"/>
    <property type="molecule type" value="mRNA"/>
</dbReference>
<dbReference type="EMBL" id="BT043200">
    <property type="protein sequence ID" value="ACF88205.1"/>
    <property type="molecule type" value="mRNA"/>
</dbReference>
<dbReference type="RefSeq" id="NP_001142330.1">
    <property type="nucleotide sequence ID" value="NM_001148858.1"/>
</dbReference>
<dbReference type="FunCoup" id="B6TGJ8">
    <property type="interactions" value="449"/>
</dbReference>
<dbReference type="PaxDb" id="4577-GRMZM2G406108_P01"/>
<dbReference type="GeneID" id="100274500"/>
<dbReference type="KEGG" id="zma:100274500"/>
<dbReference type="eggNOG" id="ENOG502QQH2">
    <property type="taxonomic scope" value="Eukaryota"/>
</dbReference>
<dbReference type="InParanoid" id="B6TGJ8"/>
<dbReference type="Proteomes" id="UP000007305">
    <property type="component" value="Unplaced"/>
</dbReference>
<dbReference type="ExpressionAtlas" id="B6TGJ8">
    <property type="expression patterns" value="baseline and differential"/>
</dbReference>
<dbReference type="GO" id="GO:0005886">
    <property type="term" value="C:plasma membrane"/>
    <property type="evidence" value="ECO:0007669"/>
    <property type="project" value="UniProtKB-SubCell"/>
</dbReference>
<dbReference type="InterPro" id="IPR006459">
    <property type="entry name" value="CASP/CASPL"/>
</dbReference>
<dbReference type="InterPro" id="IPR006702">
    <property type="entry name" value="CASP_dom"/>
</dbReference>
<dbReference type="NCBIfam" id="TIGR01569">
    <property type="entry name" value="A_tha_TIGR01569"/>
    <property type="match status" value="1"/>
</dbReference>
<dbReference type="PANTHER" id="PTHR33573:SF64">
    <property type="entry name" value="CASP-LIKE PROTEIN 2B1"/>
    <property type="match status" value="1"/>
</dbReference>
<dbReference type="PANTHER" id="PTHR33573">
    <property type="entry name" value="CASP-LIKE PROTEIN 4A4"/>
    <property type="match status" value="1"/>
</dbReference>
<dbReference type="Pfam" id="PF04535">
    <property type="entry name" value="CASP_dom"/>
    <property type="match status" value="1"/>
</dbReference>
<keyword id="KW-1003">Cell membrane</keyword>
<keyword id="KW-0472">Membrane</keyword>
<keyword id="KW-1185">Reference proteome</keyword>
<keyword id="KW-0812">Transmembrane</keyword>
<keyword id="KW-1133">Transmembrane helix</keyword>
<accession>B6TGJ8</accession>
<accession>B4G1G2</accession>
<organism>
    <name type="scientific">Zea mays</name>
    <name type="common">Maize</name>
    <dbReference type="NCBI Taxonomy" id="4577"/>
    <lineage>
        <taxon>Eukaryota</taxon>
        <taxon>Viridiplantae</taxon>
        <taxon>Streptophyta</taxon>
        <taxon>Embryophyta</taxon>
        <taxon>Tracheophyta</taxon>
        <taxon>Spermatophyta</taxon>
        <taxon>Magnoliopsida</taxon>
        <taxon>Liliopsida</taxon>
        <taxon>Poales</taxon>
        <taxon>Poaceae</taxon>
        <taxon>PACMAD clade</taxon>
        <taxon>Panicoideae</taxon>
        <taxon>Andropogonodae</taxon>
        <taxon>Andropogoneae</taxon>
        <taxon>Tripsacinae</taxon>
        <taxon>Zea</taxon>
    </lineage>
</organism>
<feature type="chain" id="PRO_0000370280" description="CASP-like protein 2U1">
    <location>
        <begin position="1"/>
        <end position="190"/>
    </location>
</feature>
<feature type="topological domain" description="Cytoplasmic" evidence="2">
    <location>
        <begin position="1"/>
        <end position="16"/>
    </location>
</feature>
<feature type="transmembrane region" description="Helical" evidence="2">
    <location>
        <begin position="17"/>
        <end position="37"/>
    </location>
</feature>
<feature type="topological domain" description="Extracellular" evidence="2">
    <location>
        <begin position="38"/>
        <end position="59"/>
    </location>
</feature>
<feature type="transmembrane region" description="Helical" evidence="2">
    <location>
        <begin position="60"/>
        <end position="80"/>
    </location>
</feature>
<feature type="topological domain" description="Cytoplasmic" evidence="2">
    <location>
        <begin position="81"/>
        <end position="100"/>
    </location>
</feature>
<feature type="transmembrane region" description="Helical" evidence="2">
    <location>
        <begin position="101"/>
        <end position="121"/>
    </location>
</feature>
<feature type="topological domain" description="Extracellular" evidence="2">
    <location>
        <begin position="122"/>
        <end position="152"/>
    </location>
</feature>
<feature type="transmembrane region" description="Helical" evidence="2">
    <location>
        <begin position="153"/>
        <end position="173"/>
    </location>
</feature>
<feature type="topological domain" description="Cytoplasmic" evidence="2">
    <location>
        <begin position="174"/>
        <end position="190"/>
    </location>
</feature>
<feature type="sequence conflict" description="In Ref. 2; ACF88205." evidence="3" ref="2">
    <original>A</original>
    <variation>T</variation>
    <location>
        <position position="70"/>
    </location>
</feature>
<feature type="sequence conflict" description="In Ref. 2; ACF88205." evidence="3" ref="2">
    <original>V</original>
    <variation>A</variation>
    <location>
        <position position="121"/>
    </location>
</feature>
<evidence type="ECO:0000250" key="1"/>
<evidence type="ECO:0000255" key="2"/>
<evidence type="ECO:0000305" key="3"/>
<sequence>MAFTSLLGSDAERKVAVAEVALRAVLCGLGALAAALVATDTQTRTFFSLQKKATYTDMKAMVLLVAAAAAAAGYSLLQAARCCCCVALLRTSIRPRARLLLAWCVFACDQALAYALLAAVVAALQASVVAKQGLPQLQWMAICALYGAFCRQAGAGVACAVAAAVDAALLAFLSAFNLFRLYGAKATTTT</sequence>
<comment type="subunit">
    <text evidence="1">Homodimer and heterodimers.</text>
</comment>
<comment type="subcellular location">
    <subcellularLocation>
        <location evidence="1">Cell membrane</location>
        <topology evidence="1">Multi-pass membrane protein</topology>
    </subcellularLocation>
</comment>
<comment type="similarity">
    <text evidence="3">Belongs to the Casparian strip membrane proteins (CASP) family.</text>
</comment>